<name>Y3922_PSEAE</name>
<proteinExistence type="evidence at protein level"/>
<reference key="1">
    <citation type="journal article" date="2000" name="Nature">
        <title>Complete genome sequence of Pseudomonas aeruginosa PAO1, an opportunistic pathogen.</title>
        <authorList>
            <person name="Stover C.K."/>
            <person name="Pham X.-Q.T."/>
            <person name="Erwin A.L."/>
            <person name="Mizoguchi S.D."/>
            <person name="Warrener P."/>
            <person name="Hickey M.J."/>
            <person name="Brinkman F.S.L."/>
            <person name="Hufnagle W.O."/>
            <person name="Kowalik D.J."/>
            <person name="Lagrou M."/>
            <person name="Garber R.L."/>
            <person name="Goltry L."/>
            <person name="Tolentino E."/>
            <person name="Westbrock-Wadman S."/>
            <person name="Yuan Y."/>
            <person name="Brody L.L."/>
            <person name="Coulter S.N."/>
            <person name="Folger K.R."/>
            <person name="Kas A."/>
            <person name="Larbig K."/>
            <person name="Lim R.M."/>
            <person name="Smith K.A."/>
            <person name="Spencer D.H."/>
            <person name="Wong G.K.-S."/>
            <person name="Wu Z."/>
            <person name="Paulsen I.T."/>
            <person name="Reizer J."/>
            <person name="Saier M.H. Jr."/>
            <person name="Hancock R.E.W."/>
            <person name="Lory S."/>
            <person name="Olson M.V."/>
        </authorList>
    </citation>
    <scope>NUCLEOTIDE SEQUENCE [LARGE SCALE GENOMIC DNA]</scope>
    <source>
        <strain>ATCC 15692 / DSM 22644 / CIP 104116 / JCM 14847 / LMG 12228 / 1C / PRS 101 / PAO1</strain>
    </source>
</reference>
<reference evidence="2" key="2">
    <citation type="thesis" date="2005" institute="Ben-Gurion University" country="Israel">
        <title>Biofouling in water treatment systems: effect of membrane properties on biofilm formation.</title>
        <authorList>
            <person name="Liddor M."/>
        </authorList>
    </citation>
    <scope>PROTEIN SEQUENCE OF 46-70; 255-264; 269-285; 365-385 AND 431-450</scope>
    <source>
        <strain>ATCC 33467 / type 1 smooth</strain>
    </source>
</reference>
<feature type="signal peptide" evidence="1">
    <location>
        <begin position="1"/>
        <end position="24"/>
    </location>
</feature>
<feature type="chain" id="PRO_0000042121" description="Uncharacterized protein PA3922">
    <location>
        <begin position="25"/>
        <end position="455"/>
    </location>
</feature>
<dbReference type="EMBL" id="AE004091">
    <property type="protein sequence ID" value="AAG07309.1"/>
    <property type="molecule type" value="Genomic_DNA"/>
</dbReference>
<dbReference type="PIR" id="G83154">
    <property type="entry name" value="G83154"/>
</dbReference>
<dbReference type="RefSeq" id="NP_252611.1">
    <property type="nucleotide sequence ID" value="NC_002516.2"/>
</dbReference>
<dbReference type="RefSeq" id="WP_003103009.1">
    <property type="nucleotide sequence ID" value="NZ_QZGE01000001.1"/>
</dbReference>
<dbReference type="STRING" id="208964.PA3922"/>
<dbReference type="PaxDb" id="208964-PA3922"/>
<dbReference type="GeneID" id="879011"/>
<dbReference type="KEGG" id="pae:PA3922"/>
<dbReference type="PATRIC" id="fig|208964.12.peg.4109"/>
<dbReference type="PseudoCAP" id="PA3922"/>
<dbReference type="HOGENOM" id="CLU_048734_0_0_6"/>
<dbReference type="InParanoid" id="Q9HX91"/>
<dbReference type="OrthoDB" id="178023at2"/>
<dbReference type="PhylomeDB" id="Q9HX91"/>
<dbReference type="BioCyc" id="PAER208964:G1FZ6-3995-MONOMER"/>
<dbReference type="Proteomes" id="UP000002438">
    <property type="component" value="Chromosome"/>
</dbReference>
<dbReference type="CDD" id="cd16329">
    <property type="entry name" value="LolA_like"/>
    <property type="match status" value="1"/>
</dbReference>
<dbReference type="Gene3D" id="2.50.20.10">
    <property type="entry name" value="Lipoprotein localisation LolA/LolB/LppX"/>
    <property type="match status" value="1"/>
</dbReference>
<dbReference type="InterPro" id="IPR010752">
    <property type="entry name" value="DUF1329"/>
</dbReference>
<dbReference type="Pfam" id="PF07044">
    <property type="entry name" value="DUF1329"/>
    <property type="match status" value="1"/>
</dbReference>
<sequence length="455" mass="51230">MKTTKILLHTGVLALSLLATQVMAAVSADEAAKLGTSLTPLGAEKAGNADGSIPAWDGGLATNAGSVDSRGFLANPYASEQPLFTITAQNVDQYKDKLTPGQLAMFKRYPDTYKIPVYKTHRSATVPAAVQEAAKRNATTTKLVEGGNGLENFDTANPFPIPQNGLEVIWNHITRYRGGSVRRLVTQATPQVNGSYQLVYFQDAFTFRTNLKDYNPNKPSNVLFYFKQRVTAPSRLAGNVLLVHETLNQVKEPRLAWLYNAGQRRVRRAPQVSYDGPGTAADGLRTSDNFDMYNGAPDRYDWKLEGKKEIYIPYNSYKLDDPKIKYSEIVKAGHINQDLTRYELHRVWHVVATLKPGERHIYAKRDFYIDEDTWQAAEIDHYDGRGTLWRVAEAHAEQYYDKQVPWYAVETLYDLLSGRYLALGMKNEEKQAYDFNYSASESDYTPAALRQEGVR</sequence>
<keyword id="KW-0903">Direct protein sequencing</keyword>
<keyword id="KW-1185">Reference proteome</keyword>
<keyword id="KW-0732">Signal</keyword>
<protein>
    <recommendedName>
        <fullName>Uncharacterized protein PA3922</fullName>
    </recommendedName>
</protein>
<evidence type="ECO:0000255" key="1"/>
<evidence type="ECO:0000305" key="2"/>
<organism>
    <name type="scientific">Pseudomonas aeruginosa (strain ATCC 15692 / DSM 22644 / CIP 104116 / JCM 14847 / LMG 12228 / 1C / PRS 101 / PAO1)</name>
    <dbReference type="NCBI Taxonomy" id="208964"/>
    <lineage>
        <taxon>Bacteria</taxon>
        <taxon>Pseudomonadati</taxon>
        <taxon>Pseudomonadota</taxon>
        <taxon>Gammaproteobacteria</taxon>
        <taxon>Pseudomonadales</taxon>
        <taxon>Pseudomonadaceae</taxon>
        <taxon>Pseudomonas</taxon>
    </lineage>
</organism>
<gene>
    <name type="ordered locus">PA3922</name>
</gene>
<accession>Q9HX91</accession>